<organism>
    <name type="scientific">Ergaula capucina</name>
    <name type="common">Beetle roach</name>
    <dbReference type="NCBI Taxonomy" id="76901"/>
    <lineage>
        <taxon>Eukaryota</taxon>
        <taxon>Metazoa</taxon>
        <taxon>Ecdysozoa</taxon>
        <taxon>Arthropoda</taxon>
        <taxon>Hexapoda</taxon>
        <taxon>Insecta</taxon>
        <taxon>Pterygota</taxon>
        <taxon>Neoptera</taxon>
        <taxon>Polyneoptera</taxon>
        <taxon>Dictyoptera</taxon>
        <taxon>Blattodea</taxon>
        <taxon>Corydioidea</taxon>
        <taxon>Corydiidae</taxon>
        <taxon>Ergaula</taxon>
    </lineage>
</organism>
<comment type="function">
    <text evidence="1">Myotropic peptide.</text>
</comment>
<comment type="subcellular location">
    <subcellularLocation>
        <location evidence="5">Secreted</location>
    </subcellularLocation>
</comment>
<comment type="similarity">
    <text evidence="2">Belongs to the gastrin/cholecystokinin family.</text>
</comment>
<sequence length="11" mass="1445">EQFDDYGHMRF</sequence>
<feature type="peptide" id="PRO_0000378873" description="Sulfakinin-1" evidence="3">
    <location>
        <begin position="1"/>
        <end position="11"/>
    </location>
</feature>
<feature type="modified residue" description="Sulfotyrosine" evidence="1">
    <location>
        <position position="6"/>
    </location>
</feature>
<feature type="modified residue" description="Phenylalanine amide" evidence="3">
    <location>
        <position position="11"/>
    </location>
</feature>
<proteinExistence type="evidence at protein level"/>
<accession>P85613</accession>
<dbReference type="GO" id="GO:0005576">
    <property type="term" value="C:extracellular region"/>
    <property type="evidence" value="ECO:0007669"/>
    <property type="project" value="UniProtKB-SubCell"/>
</dbReference>
<dbReference type="GO" id="GO:0005179">
    <property type="term" value="F:hormone activity"/>
    <property type="evidence" value="ECO:0007669"/>
    <property type="project" value="UniProtKB-KW"/>
</dbReference>
<dbReference type="GO" id="GO:0007218">
    <property type="term" value="P:neuropeptide signaling pathway"/>
    <property type="evidence" value="ECO:0007669"/>
    <property type="project" value="UniProtKB-KW"/>
</dbReference>
<dbReference type="InterPro" id="IPR013152">
    <property type="entry name" value="Gastrin/cholecystokinin_CS"/>
</dbReference>
<dbReference type="InterPro" id="IPR013259">
    <property type="entry name" value="Sulfakinin"/>
</dbReference>
<dbReference type="Pfam" id="PF08257">
    <property type="entry name" value="Sulfakinin"/>
    <property type="match status" value="1"/>
</dbReference>
<dbReference type="PROSITE" id="PS00259">
    <property type="entry name" value="GASTRIN"/>
    <property type="match status" value="1"/>
</dbReference>
<name>SK1_ERGCA</name>
<reference evidence="5" key="1">
    <citation type="journal article" date="2009" name="BMC Evol. Biol.">
        <title>A proteomic approach for studying insect phylogeny: CAPA peptides of ancient insect taxa (Dictyoptera, Blattoptera) as a test case.</title>
        <authorList>
            <person name="Roth S."/>
            <person name="Fromm B."/>
            <person name="Gaede G."/>
            <person name="Predel R."/>
        </authorList>
    </citation>
    <scope>PROTEIN SEQUENCE</scope>
    <scope>AMIDATION AT PHE-11</scope>
    <source>
        <tissue evidence="3">Corpora cardiaca</tissue>
    </source>
</reference>
<protein>
    <recommendedName>
        <fullName evidence="4">Sulfakinin-1</fullName>
        <shortName evidence="4">ErgCa-SK-1</shortName>
    </recommendedName>
</protein>
<keyword id="KW-0027">Amidation</keyword>
<keyword id="KW-0903">Direct protein sequencing</keyword>
<keyword id="KW-0372">Hormone</keyword>
<keyword id="KW-0527">Neuropeptide</keyword>
<keyword id="KW-0964">Secreted</keyword>
<keyword id="KW-0765">Sulfation</keyword>
<evidence type="ECO:0000250" key="1">
    <source>
        <dbReference type="UniProtKB" id="P41493"/>
    </source>
</evidence>
<evidence type="ECO:0000255" key="2"/>
<evidence type="ECO:0000269" key="3">
    <source>
    </source>
</evidence>
<evidence type="ECO:0000303" key="4">
    <source>
    </source>
</evidence>
<evidence type="ECO:0000305" key="5"/>